<evidence type="ECO:0000250" key="1"/>
<evidence type="ECO:0000250" key="2">
    <source>
        <dbReference type="UniProtKB" id="P45568"/>
    </source>
</evidence>
<evidence type="ECO:0000250" key="3">
    <source>
        <dbReference type="UniProtKB" id="Q9XFS9"/>
    </source>
</evidence>
<evidence type="ECO:0000255" key="4"/>
<evidence type="ECO:0000305" key="5"/>
<dbReference type="EC" id="1.1.1.267" evidence="2"/>
<dbReference type="EMBL" id="AF367205">
    <property type="protein sequence ID" value="AAL37560.1"/>
    <property type="molecule type" value="mRNA"/>
</dbReference>
<dbReference type="EMBL" id="AP002845">
    <property type="protein sequence ID" value="BAB78606.1"/>
    <property type="molecule type" value="Genomic_DNA"/>
</dbReference>
<dbReference type="EMBL" id="AP002863">
    <property type="protein sequence ID" value="BAB16915.1"/>
    <property type="molecule type" value="Genomic_DNA"/>
</dbReference>
<dbReference type="EMBL" id="AP008207">
    <property type="protein sequence ID" value="BAF03694.1"/>
    <property type="molecule type" value="Genomic_DNA"/>
</dbReference>
<dbReference type="EMBL" id="AP014957">
    <property type="protein sequence ID" value="BAS69977.1"/>
    <property type="molecule type" value="Genomic_DNA"/>
</dbReference>
<dbReference type="EMBL" id="CM000138">
    <property type="protein sequence ID" value="EEE53719.1"/>
    <property type="molecule type" value="Genomic_DNA"/>
</dbReference>
<dbReference type="EMBL" id="AK099702">
    <property type="protein sequence ID" value="BAG94262.1"/>
    <property type="molecule type" value="mRNA"/>
</dbReference>
<dbReference type="RefSeq" id="XP_015618768.1">
    <property type="nucleotide sequence ID" value="XM_015763282.1"/>
</dbReference>
<dbReference type="SMR" id="Q8W250"/>
<dbReference type="FunCoup" id="Q8W250">
    <property type="interactions" value="748"/>
</dbReference>
<dbReference type="STRING" id="39947.Q8W250"/>
<dbReference type="PaxDb" id="39947-Q8W250"/>
<dbReference type="EnsemblPlants" id="Os01t0106900-01">
    <property type="protein sequence ID" value="Os01t0106900-01"/>
    <property type="gene ID" value="Os01g0106900"/>
</dbReference>
<dbReference type="EnsemblPlants" id="Os01t0106900-02">
    <property type="protein sequence ID" value="Os01t0106900-02"/>
    <property type="gene ID" value="Os01g0106900"/>
</dbReference>
<dbReference type="Gramene" id="Os01t0106900-01">
    <property type="protein sequence ID" value="Os01t0106900-01"/>
    <property type="gene ID" value="Os01g0106900"/>
</dbReference>
<dbReference type="Gramene" id="Os01t0106900-02">
    <property type="protein sequence ID" value="Os01t0106900-02"/>
    <property type="gene ID" value="Os01g0106900"/>
</dbReference>
<dbReference type="KEGG" id="dosa:Os01g0106900"/>
<dbReference type="eggNOG" id="ENOG502QPJ7">
    <property type="taxonomic scope" value="Eukaryota"/>
</dbReference>
<dbReference type="HOGENOM" id="CLU_035714_4_0_1"/>
<dbReference type="InParanoid" id="Q8W250"/>
<dbReference type="OMA" id="AHPNWVM"/>
<dbReference type="OrthoDB" id="3482at2759"/>
<dbReference type="PlantReactome" id="R-OSA-1119464">
    <property type="pathway name" value="Methylerythritol phosphate pathway"/>
</dbReference>
<dbReference type="UniPathway" id="UPA00056">
    <property type="reaction ID" value="UER00092"/>
</dbReference>
<dbReference type="Proteomes" id="UP000000763">
    <property type="component" value="Chromosome 1"/>
</dbReference>
<dbReference type="Proteomes" id="UP000007752">
    <property type="component" value="Chromosome 1"/>
</dbReference>
<dbReference type="Proteomes" id="UP000059680">
    <property type="component" value="Chromosome 1"/>
</dbReference>
<dbReference type="GO" id="GO:0009570">
    <property type="term" value="C:chloroplast stroma"/>
    <property type="evidence" value="ECO:0007669"/>
    <property type="project" value="UniProtKB-SubCell"/>
</dbReference>
<dbReference type="GO" id="GO:0030604">
    <property type="term" value="F:1-deoxy-D-xylulose-5-phosphate reductoisomerase activity"/>
    <property type="evidence" value="ECO:0000318"/>
    <property type="project" value="GO_Central"/>
</dbReference>
<dbReference type="GO" id="GO:0030145">
    <property type="term" value="F:manganese ion binding"/>
    <property type="evidence" value="ECO:0000318"/>
    <property type="project" value="GO_Central"/>
</dbReference>
<dbReference type="GO" id="GO:0070402">
    <property type="term" value="F:NADPH binding"/>
    <property type="evidence" value="ECO:0000318"/>
    <property type="project" value="GO_Central"/>
</dbReference>
<dbReference type="GO" id="GO:0051484">
    <property type="term" value="P:isopentenyl diphosphate biosynthetic process, methylerythritol 4-phosphate pathway involved in terpenoid biosynthetic process"/>
    <property type="evidence" value="ECO:0000318"/>
    <property type="project" value="GO_Central"/>
</dbReference>
<dbReference type="FunFam" id="1.10.1740.10:FF:000006">
    <property type="entry name" value="1-deoxy-D-xylulose 5-phosphate reductoisomerase, chloroplastic"/>
    <property type="match status" value="1"/>
</dbReference>
<dbReference type="FunFam" id="3.40.50.720:FF:000183">
    <property type="entry name" value="1-deoxy-D-xylulose 5-phosphate reductoisomerase, chloroplastic"/>
    <property type="match status" value="1"/>
</dbReference>
<dbReference type="Gene3D" id="1.10.1740.10">
    <property type="match status" value="1"/>
</dbReference>
<dbReference type="Gene3D" id="3.40.50.720">
    <property type="entry name" value="NAD(P)-binding Rossmann-like Domain"/>
    <property type="match status" value="1"/>
</dbReference>
<dbReference type="HAMAP" id="MF_00183">
    <property type="entry name" value="DXP_reductoisom"/>
    <property type="match status" value="1"/>
</dbReference>
<dbReference type="InterPro" id="IPR003821">
    <property type="entry name" value="DXP_reductoisomerase"/>
</dbReference>
<dbReference type="InterPro" id="IPR013644">
    <property type="entry name" value="DXP_reductoisomerase_C"/>
</dbReference>
<dbReference type="InterPro" id="IPR013512">
    <property type="entry name" value="DXP_reductoisomerase_N"/>
</dbReference>
<dbReference type="InterPro" id="IPR026877">
    <property type="entry name" value="DXPR_C"/>
</dbReference>
<dbReference type="InterPro" id="IPR036169">
    <property type="entry name" value="DXPR_C_sf"/>
</dbReference>
<dbReference type="InterPro" id="IPR036291">
    <property type="entry name" value="NAD(P)-bd_dom_sf"/>
</dbReference>
<dbReference type="NCBIfam" id="TIGR00243">
    <property type="entry name" value="Dxr"/>
    <property type="match status" value="1"/>
</dbReference>
<dbReference type="NCBIfam" id="NF009114">
    <property type="entry name" value="PRK12464.1"/>
    <property type="match status" value="1"/>
</dbReference>
<dbReference type="PANTHER" id="PTHR30525">
    <property type="entry name" value="1-DEOXY-D-XYLULOSE 5-PHOSPHATE REDUCTOISOMERASE"/>
    <property type="match status" value="1"/>
</dbReference>
<dbReference type="PANTHER" id="PTHR30525:SF0">
    <property type="entry name" value="1-DEOXY-D-XYLULOSE 5-PHOSPHATE REDUCTOISOMERASE, CHLOROPLASTIC"/>
    <property type="match status" value="1"/>
</dbReference>
<dbReference type="Pfam" id="PF08436">
    <property type="entry name" value="DXP_redisom_C"/>
    <property type="match status" value="1"/>
</dbReference>
<dbReference type="Pfam" id="PF02670">
    <property type="entry name" value="DXP_reductoisom"/>
    <property type="match status" value="1"/>
</dbReference>
<dbReference type="Pfam" id="PF13288">
    <property type="entry name" value="DXPR_C"/>
    <property type="match status" value="1"/>
</dbReference>
<dbReference type="PIRSF" id="PIRSF006205">
    <property type="entry name" value="Dxp_reductismrs"/>
    <property type="match status" value="1"/>
</dbReference>
<dbReference type="SUPFAM" id="SSF69055">
    <property type="entry name" value="1-deoxy-D-xylulose-5-phosphate reductoisomerase, C-terminal domain"/>
    <property type="match status" value="1"/>
</dbReference>
<dbReference type="SUPFAM" id="SSF55347">
    <property type="entry name" value="Glyceraldehyde-3-phosphate dehydrogenase-like, C-terminal domain"/>
    <property type="match status" value="1"/>
</dbReference>
<dbReference type="SUPFAM" id="SSF51735">
    <property type="entry name" value="NAD(P)-binding Rossmann-fold domains"/>
    <property type="match status" value="1"/>
</dbReference>
<protein>
    <recommendedName>
        <fullName>1-deoxy-D-xylulose 5-phosphate reductoisomerase, chloroplastic</fullName>
        <shortName>1-deoxyxylulose-5-phosphate reductoisomerase</shortName>
        <shortName>DXP reductoisomerase</shortName>
        <ecNumber evidence="2">1.1.1.267</ecNumber>
    </recommendedName>
    <alternativeName>
        <fullName>2-C-methyl-D-erythritol 4-phosphate synthase</fullName>
    </alternativeName>
</protein>
<name>DXR_ORYSJ</name>
<comment type="function">
    <text evidence="3">Enzyme of the plastid non-mevalonate pathway for isoprenoid biosynthesis that catalyzes the NADPH-dependent rearrangement and reduction of 1-deoxy-D-xylulose-5-phosphate (DXP) to 2-C-methyl-D-erythritol 4-phosphate (MEP). Required for chloroplast development.</text>
</comment>
<comment type="catalytic activity">
    <reaction evidence="2">
        <text>2-C-methyl-D-erythritol 4-phosphate + NADP(+) = 1-deoxy-D-xylulose 5-phosphate + NADPH + H(+)</text>
        <dbReference type="Rhea" id="RHEA:13717"/>
        <dbReference type="ChEBI" id="CHEBI:15378"/>
        <dbReference type="ChEBI" id="CHEBI:57783"/>
        <dbReference type="ChEBI" id="CHEBI:57792"/>
        <dbReference type="ChEBI" id="CHEBI:58262"/>
        <dbReference type="ChEBI" id="CHEBI:58349"/>
        <dbReference type="EC" id="1.1.1.267"/>
    </reaction>
    <physiologicalReaction direction="right-to-left" evidence="2">
        <dbReference type="Rhea" id="RHEA:13719"/>
    </physiologicalReaction>
</comment>
<comment type="cofactor">
    <cofactor evidence="2">
        <name>Mn(2+)</name>
        <dbReference type="ChEBI" id="CHEBI:29035"/>
    </cofactor>
    <cofactor evidence="2">
        <name>Mg(2+)</name>
        <dbReference type="ChEBI" id="CHEBI:18420"/>
    </cofactor>
</comment>
<comment type="pathway">
    <text evidence="3">Isoprenoid biosynthesis; isopentenyl diphosphate biosynthesis via DXP pathway; isopentenyl diphosphate from 1-deoxy-D-xylulose 5-phosphate: step 1/6.</text>
</comment>
<comment type="subcellular location">
    <subcellularLocation>
        <location evidence="1">Plastid</location>
        <location evidence="1">Chloroplast stroma</location>
    </subcellularLocation>
</comment>
<comment type="induction">
    <text>By the mycorrhizal fungus G.intraradices colonization in roots.</text>
</comment>
<comment type="similarity">
    <text evidence="5">Belongs to the DXR family.</text>
</comment>
<reference key="1">
    <citation type="submission" date="2001-03" db="EMBL/GenBank/DDBJ databases">
        <title>1-deoxy-D-xylulose 5-phosphate reductoisomerase (DXR), catalyzing the first committed step of the mevalonate-independent pathway for IPP biosynthesis.</title>
        <authorList>
            <person name="Carretero-Paulet L."/>
            <person name="Boronat A."/>
            <person name="Campos N."/>
        </authorList>
    </citation>
    <scope>NUCLEOTIDE SEQUENCE [MRNA]</scope>
</reference>
<reference key="2">
    <citation type="journal article" date="2002" name="Nature">
        <title>The genome sequence and structure of rice chromosome 1.</title>
        <authorList>
            <person name="Sasaki T."/>
            <person name="Matsumoto T."/>
            <person name="Yamamoto K."/>
            <person name="Sakata K."/>
            <person name="Baba T."/>
            <person name="Katayose Y."/>
            <person name="Wu J."/>
            <person name="Niimura Y."/>
            <person name="Cheng Z."/>
            <person name="Nagamura Y."/>
            <person name="Antonio B.A."/>
            <person name="Kanamori H."/>
            <person name="Hosokawa S."/>
            <person name="Masukawa M."/>
            <person name="Arikawa K."/>
            <person name="Chiden Y."/>
            <person name="Hayashi M."/>
            <person name="Okamoto M."/>
            <person name="Ando T."/>
            <person name="Aoki H."/>
            <person name="Arita K."/>
            <person name="Hamada M."/>
            <person name="Harada C."/>
            <person name="Hijishita S."/>
            <person name="Honda M."/>
            <person name="Ichikawa Y."/>
            <person name="Idonuma A."/>
            <person name="Iijima M."/>
            <person name="Ikeda M."/>
            <person name="Ikeno M."/>
            <person name="Ito S."/>
            <person name="Ito T."/>
            <person name="Ito Y."/>
            <person name="Ito Y."/>
            <person name="Iwabuchi A."/>
            <person name="Kamiya K."/>
            <person name="Karasawa W."/>
            <person name="Katagiri S."/>
            <person name="Kikuta A."/>
            <person name="Kobayashi N."/>
            <person name="Kono I."/>
            <person name="Machita K."/>
            <person name="Maehara T."/>
            <person name="Mizuno H."/>
            <person name="Mizubayashi T."/>
            <person name="Mukai Y."/>
            <person name="Nagasaki H."/>
            <person name="Nakashima M."/>
            <person name="Nakama Y."/>
            <person name="Nakamichi Y."/>
            <person name="Nakamura M."/>
            <person name="Namiki N."/>
            <person name="Negishi M."/>
            <person name="Ohta I."/>
            <person name="Ono N."/>
            <person name="Saji S."/>
            <person name="Sakai K."/>
            <person name="Shibata M."/>
            <person name="Shimokawa T."/>
            <person name="Shomura A."/>
            <person name="Song J."/>
            <person name="Takazaki Y."/>
            <person name="Terasawa K."/>
            <person name="Tsuji K."/>
            <person name="Waki K."/>
            <person name="Yamagata H."/>
            <person name="Yamane H."/>
            <person name="Yoshiki S."/>
            <person name="Yoshihara R."/>
            <person name="Yukawa K."/>
            <person name="Zhong H."/>
            <person name="Iwama H."/>
            <person name="Endo T."/>
            <person name="Ito H."/>
            <person name="Hahn J.H."/>
            <person name="Kim H.-I."/>
            <person name="Eun M.-Y."/>
            <person name="Yano M."/>
            <person name="Jiang J."/>
            <person name="Gojobori T."/>
        </authorList>
    </citation>
    <scope>NUCLEOTIDE SEQUENCE [LARGE SCALE GENOMIC DNA]</scope>
    <source>
        <strain>cv. Nipponbare</strain>
    </source>
</reference>
<reference key="3">
    <citation type="journal article" date="2005" name="Nature">
        <title>The map-based sequence of the rice genome.</title>
        <authorList>
            <consortium name="International rice genome sequencing project (IRGSP)"/>
        </authorList>
    </citation>
    <scope>NUCLEOTIDE SEQUENCE [LARGE SCALE GENOMIC DNA]</scope>
    <source>
        <strain>cv. Nipponbare</strain>
    </source>
</reference>
<reference key="4">
    <citation type="journal article" date="2008" name="Nucleic Acids Res.">
        <title>The rice annotation project database (RAP-DB): 2008 update.</title>
        <authorList>
            <consortium name="The rice annotation project (RAP)"/>
        </authorList>
    </citation>
    <scope>GENOME REANNOTATION</scope>
    <source>
        <strain>cv. Nipponbare</strain>
    </source>
</reference>
<reference key="5">
    <citation type="journal article" date="2013" name="Rice">
        <title>Improvement of the Oryza sativa Nipponbare reference genome using next generation sequence and optical map data.</title>
        <authorList>
            <person name="Kawahara Y."/>
            <person name="de la Bastide M."/>
            <person name="Hamilton J.P."/>
            <person name="Kanamori H."/>
            <person name="McCombie W.R."/>
            <person name="Ouyang S."/>
            <person name="Schwartz D.C."/>
            <person name="Tanaka T."/>
            <person name="Wu J."/>
            <person name="Zhou S."/>
            <person name="Childs K.L."/>
            <person name="Davidson R.M."/>
            <person name="Lin H."/>
            <person name="Quesada-Ocampo L."/>
            <person name="Vaillancourt B."/>
            <person name="Sakai H."/>
            <person name="Lee S.S."/>
            <person name="Kim J."/>
            <person name="Numa H."/>
            <person name="Itoh T."/>
            <person name="Buell C.R."/>
            <person name="Matsumoto T."/>
        </authorList>
    </citation>
    <scope>GENOME REANNOTATION</scope>
    <source>
        <strain>cv. Nipponbare</strain>
    </source>
</reference>
<reference key="6">
    <citation type="journal article" date="2005" name="PLoS Biol.">
        <title>The genomes of Oryza sativa: a history of duplications.</title>
        <authorList>
            <person name="Yu J."/>
            <person name="Wang J."/>
            <person name="Lin W."/>
            <person name="Li S."/>
            <person name="Li H."/>
            <person name="Zhou J."/>
            <person name="Ni P."/>
            <person name="Dong W."/>
            <person name="Hu S."/>
            <person name="Zeng C."/>
            <person name="Zhang J."/>
            <person name="Zhang Y."/>
            <person name="Li R."/>
            <person name="Xu Z."/>
            <person name="Li S."/>
            <person name="Li X."/>
            <person name="Zheng H."/>
            <person name="Cong L."/>
            <person name="Lin L."/>
            <person name="Yin J."/>
            <person name="Geng J."/>
            <person name="Li G."/>
            <person name="Shi J."/>
            <person name="Liu J."/>
            <person name="Lv H."/>
            <person name="Li J."/>
            <person name="Wang J."/>
            <person name="Deng Y."/>
            <person name="Ran L."/>
            <person name="Shi X."/>
            <person name="Wang X."/>
            <person name="Wu Q."/>
            <person name="Li C."/>
            <person name="Ren X."/>
            <person name="Wang J."/>
            <person name="Wang X."/>
            <person name="Li D."/>
            <person name="Liu D."/>
            <person name="Zhang X."/>
            <person name="Ji Z."/>
            <person name="Zhao W."/>
            <person name="Sun Y."/>
            <person name="Zhang Z."/>
            <person name="Bao J."/>
            <person name="Han Y."/>
            <person name="Dong L."/>
            <person name="Ji J."/>
            <person name="Chen P."/>
            <person name="Wu S."/>
            <person name="Liu J."/>
            <person name="Xiao Y."/>
            <person name="Bu D."/>
            <person name="Tan J."/>
            <person name="Yang L."/>
            <person name="Ye C."/>
            <person name="Zhang J."/>
            <person name="Xu J."/>
            <person name="Zhou Y."/>
            <person name="Yu Y."/>
            <person name="Zhang B."/>
            <person name="Zhuang S."/>
            <person name="Wei H."/>
            <person name="Liu B."/>
            <person name="Lei M."/>
            <person name="Yu H."/>
            <person name="Li Y."/>
            <person name="Xu H."/>
            <person name="Wei S."/>
            <person name="He X."/>
            <person name="Fang L."/>
            <person name="Zhang Z."/>
            <person name="Zhang Y."/>
            <person name="Huang X."/>
            <person name="Su Z."/>
            <person name="Tong W."/>
            <person name="Li J."/>
            <person name="Tong Z."/>
            <person name="Li S."/>
            <person name="Ye J."/>
            <person name="Wang L."/>
            <person name="Fang L."/>
            <person name="Lei T."/>
            <person name="Chen C.-S."/>
            <person name="Chen H.-C."/>
            <person name="Xu Z."/>
            <person name="Li H."/>
            <person name="Huang H."/>
            <person name="Zhang F."/>
            <person name="Xu H."/>
            <person name="Li N."/>
            <person name="Zhao C."/>
            <person name="Li S."/>
            <person name="Dong L."/>
            <person name="Huang Y."/>
            <person name="Li L."/>
            <person name="Xi Y."/>
            <person name="Qi Q."/>
            <person name="Li W."/>
            <person name="Zhang B."/>
            <person name="Hu W."/>
            <person name="Zhang Y."/>
            <person name="Tian X."/>
            <person name="Jiao Y."/>
            <person name="Liang X."/>
            <person name="Jin J."/>
            <person name="Gao L."/>
            <person name="Zheng W."/>
            <person name="Hao B."/>
            <person name="Liu S.-M."/>
            <person name="Wang W."/>
            <person name="Yuan L."/>
            <person name="Cao M."/>
            <person name="McDermott J."/>
            <person name="Samudrala R."/>
            <person name="Wang J."/>
            <person name="Wong G.K.-S."/>
            <person name="Yang H."/>
        </authorList>
    </citation>
    <scope>NUCLEOTIDE SEQUENCE [LARGE SCALE GENOMIC DNA]</scope>
    <source>
        <strain>cv. Nipponbare</strain>
    </source>
</reference>
<reference key="7">
    <citation type="journal article" date="2003" name="Science">
        <title>Collection, mapping, and annotation of over 28,000 cDNA clones from japonica rice.</title>
        <authorList>
            <consortium name="The rice full-length cDNA consortium"/>
        </authorList>
    </citation>
    <scope>NUCLEOTIDE SEQUENCE [LARGE SCALE MRNA]</scope>
    <source>
        <strain>cv. Nipponbare</strain>
    </source>
</reference>
<proteinExistence type="evidence at transcript level"/>
<organism>
    <name type="scientific">Oryza sativa subsp. japonica</name>
    <name type="common">Rice</name>
    <dbReference type="NCBI Taxonomy" id="39947"/>
    <lineage>
        <taxon>Eukaryota</taxon>
        <taxon>Viridiplantae</taxon>
        <taxon>Streptophyta</taxon>
        <taxon>Embryophyta</taxon>
        <taxon>Tracheophyta</taxon>
        <taxon>Spermatophyta</taxon>
        <taxon>Magnoliopsida</taxon>
        <taxon>Liliopsida</taxon>
        <taxon>Poales</taxon>
        <taxon>Poaceae</taxon>
        <taxon>BOP clade</taxon>
        <taxon>Oryzoideae</taxon>
        <taxon>Oryzeae</taxon>
        <taxon>Oryzinae</taxon>
        <taxon>Oryza</taxon>
        <taxon>Oryza sativa</taxon>
    </lineage>
</organism>
<keyword id="KW-0150">Chloroplast</keyword>
<keyword id="KW-0414">Isoprene biosynthesis</keyword>
<keyword id="KW-0464">Manganese</keyword>
<keyword id="KW-0479">Metal-binding</keyword>
<keyword id="KW-0521">NADP</keyword>
<keyword id="KW-0560">Oxidoreductase</keyword>
<keyword id="KW-0934">Plastid</keyword>
<keyword id="KW-1185">Reference proteome</keyword>
<keyword id="KW-0809">Transit peptide</keyword>
<gene>
    <name type="primary">DXR</name>
    <name type="ordered locus">Os01g0106900</name>
    <name type="ordered locus">LOC_Os01g01710</name>
    <name type="ORF">OsJ_00058</name>
    <name type="ORF">P0005A05.24</name>
    <name type="ORF">P0482C06.2</name>
</gene>
<accession>Q8W250</accession>
<accession>A0A0N7KC68</accession>
<accession>Q0JRD4</accession>
<accession>Q9FTN0</accession>
<feature type="transit peptide" description="Chloroplast" evidence="4">
    <location>
        <begin position="1"/>
        <end position="49"/>
    </location>
</feature>
<feature type="chain" id="PRO_0000247469" description="1-deoxy-D-xylulose 5-phosphate reductoisomerase, chloroplastic">
    <location>
        <begin position="50"/>
        <end position="473"/>
    </location>
</feature>
<feature type="binding site" evidence="2">
    <location>
        <position position="85"/>
    </location>
    <ligand>
        <name>NADPH</name>
        <dbReference type="ChEBI" id="CHEBI:57783"/>
    </ligand>
</feature>
<feature type="binding site" evidence="2">
    <location>
        <position position="86"/>
    </location>
    <ligand>
        <name>NADPH</name>
        <dbReference type="ChEBI" id="CHEBI:57783"/>
    </ligand>
</feature>
<feature type="binding site" evidence="2">
    <location>
        <position position="87"/>
    </location>
    <ligand>
        <name>NADPH</name>
        <dbReference type="ChEBI" id="CHEBI:57783"/>
    </ligand>
</feature>
<feature type="binding site" evidence="2">
    <location>
        <position position="88"/>
    </location>
    <ligand>
        <name>NADPH</name>
        <dbReference type="ChEBI" id="CHEBI:57783"/>
    </ligand>
</feature>
<feature type="binding site" evidence="2">
    <location>
        <position position="111"/>
    </location>
    <ligand>
        <name>NADPH</name>
        <dbReference type="ChEBI" id="CHEBI:57783"/>
    </ligand>
</feature>
<feature type="binding site" evidence="2">
    <location>
        <position position="113"/>
    </location>
    <ligand>
        <name>NADPH</name>
        <dbReference type="ChEBI" id="CHEBI:57783"/>
    </ligand>
</feature>
<feature type="binding site" evidence="2">
    <location>
        <position position="199"/>
    </location>
    <ligand>
        <name>NADPH</name>
        <dbReference type="ChEBI" id="CHEBI:57783"/>
    </ligand>
</feature>
<feature type="binding site" evidence="2">
    <location>
        <position position="200"/>
    </location>
    <ligand>
        <name>1-deoxy-D-xylulose 5-phosphate</name>
        <dbReference type="ChEBI" id="CHEBI:57792"/>
    </ligand>
</feature>
<feature type="binding site" evidence="2">
    <location>
        <position position="201"/>
    </location>
    <ligand>
        <name>NADPH</name>
        <dbReference type="ChEBI" id="CHEBI:57783"/>
    </ligand>
</feature>
<feature type="binding site" evidence="2">
    <location>
        <position position="225"/>
    </location>
    <ligand>
        <name>Mn(2+)</name>
        <dbReference type="ChEBI" id="CHEBI:29035"/>
    </ligand>
</feature>
<feature type="binding site" evidence="2">
    <location>
        <position position="226"/>
    </location>
    <ligand>
        <name>1-deoxy-D-xylulose 5-phosphate</name>
        <dbReference type="ChEBI" id="CHEBI:57792"/>
    </ligand>
</feature>
<feature type="binding site" evidence="2">
    <location>
        <position position="227"/>
    </location>
    <ligand>
        <name>1-deoxy-D-xylulose 5-phosphate</name>
        <dbReference type="ChEBI" id="CHEBI:57792"/>
    </ligand>
</feature>
<feature type="binding site" evidence="2">
    <location>
        <position position="227"/>
    </location>
    <ligand>
        <name>Mn(2+)</name>
        <dbReference type="ChEBI" id="CHEBI:29035"/>
    </ligand>
</feature>
<feature type="binding site" evidence="2">
    <location>
        <position position="251"/>
    </location>
    <ligand>
        <name>1-deoxy-D-xylulose 5-phosphate</name>
        <dbReference type="ChEBI" id="CHEBI:57792"/>
    </ligand>
</feature>
<feature type="binding site" evidence="2">
    <location>
        <position position="274"/>
    </location>
    <ligand>
        <name>1-deoxy-D-xylulose 5-phosphate</name>
        <dbReference type="ChEBI" id="CHEBI:57792"/>
    </ligand>
</feature>
<feature type="binding site" evidence="2">
    <location>
        <position position="280"/>
    </location>
    <ligand>
        <name>NADPH</name>
        <dbReference type="ChEBI" id="CHEBI:57783"/>
    </ligand>
</feature>
<feature type="binding site" evidence="2">
    <location>
        <position position="287"/>
    </location>
    <ligand>
        <name>1-deoxy-D-xylulose 5-phosphate</name>
        <dbReference type="ChEBI" id="CHEBI:57792"/>
    </ligand>
</feature>
<feature type="binding site" evidence="2">
    <location>
        <position position="292"/>
    </location>
    <ligand>
        <name>1-deoxy-D-xylulose 5-phosphate</name>
        <dbReference type="ChEBI" id="CHEBI:57792"/>
    </ligand>
</feature>
<feature type="binding site" evidence="2">
    <location>
        <position position="293"/>
    </location>
    <ligand>
        <name>1-deoxy-D-xylulose 5-phosphate</name>
        <dbReference type="ChEBI" id="CHEBI:57792"/>
    </ligand>
</feature>
<feature type="binding site" evidence="2">
    <location>
        <position position="296"/>
    </location>
    <ligand>
        <name>1-deoxy-D-xylulose 5-phosphate</name>
        <dbReference type="ChEBI" id="CHEBI:57792"/>
    </ligand>
</feature>
<feature type="binding site" evidence="2">
    <location>
        <position position="296"/>
    </location>
    <ligand>
        <name>Mn(2+)</name>
        <dbReference type="ChEBI" id="CHEBI:29035"/>
    </ligand>
</feature>
<feature type="sequence conflict" description="In Ref. 1; AAL37560." evidence="5" ref="1">
    <original>L</original>
    <variation>H</variation>
    <location>
        <position position="128"/>
    </location>
</feature>
<sequence length="473" mass="51473">MALKVVSFPGDLAAVSFLDSNRGGAFNQLKVDLPFQTRDRRAVSLRRTCCSMQQAPPPAWPGRAVVEPGRRSWDGPKPISIVGSTGSIGTQTLDIVAENPDKFRVVALAAGSNVTLLADQVKTFKPKLVAVRNESLVDELKEALADCDWKPEIIPGEQGVIEVARHPDAVTVVTGIVGCAGLKPTVAAIEAGKDIALANKETLIAGGPFVLPLAQKHKVKILPADSEHSAIFQCIQGLPEGALRRIILTASGGAFRDWPVDKLKEVKVADALKHPNWNMGKKITVDSATLFNKGLEVIEAHYLFGAEYDDIEIVIHPQSIIHSMIETQDSSVLAQLGWPDMRIPILYTMSWPDRIYCSEVTWPRLDLCKLGSLTFKAPDNVKYPSMDLAYAAGRAGGTMTGVLSAANEKAVELFIDEKIGYLDIFKVVELTCDAHRNELVTRPSLEEIIHYDLWAREYAASLQPSTGLSPVPV</sequence>